<comment type="function">
    <text>Light-driven chloride pump.</text>
</comment>
<comment type="subcellular location">
    <subcellularLocation>
        <location>Cell membrane</location>
        <topology>Multi-pass membrane protein</topology>
    </subcellularLocation>
</comment>
<comment type="similarity">
    <text evidence="2">Belongs to the archaeal/bacterial/fungal opsin family.</text>
</comment>
<feature type="chain" id="PRO_0000196263" description="Halorhodopsin">
    <location>
        <begin position="1"/>
        <end position="282"/>
    </location>
</feature>
<feature type="topological domain" description="Extracellular" evidence="1">
    <location>
        <begin position="1"/>
        <end position="29"/>
    </location>
</feature>
<feature type="transmembrane region" description="Helical; Name=Helix A" evidence="1">
    <location>
        <begin position="30"/>
        <end position="55"/>
    </location>
</feature>
<feature type="topological domain" description="Cytoplasmic" evidence="1">
    <location>
        <begin position="56"/>
        <end position="61"/>
    </location>
</feature>
<feature type="transmembrane region" description="Helical; Name=Helix B" evidence="1">
    <location>
        <begin position="62"/>
        <end position="85"/>
    </location>
</feature>
<feature type="topological domain" description="Extracellular" evidence="1">
    <location>
        <begin position="86"/>
        <end position="109"/>
    </location>
</feature>
<feature type="transmembrane region" description="Helical; Name=Helix C" evidence="1">
    <location>
        <begin position="110"/>
        <end position="131"/>
    </location>
</feature>
<feature type="topological domain" description="Cytoplasmic" evidence="1">
    <location>
        <begin position="132"/>
        <end position="134"/>
    </location>
</feature>
<feature type="transmembrane region" description="Helical; Name=Helix D" evidence="1">
    <location>
        <begin position="135"/>
        <end position="158"/>
    </location>
</feature>
<feature type="topological domain" description="Extracellular" evidence="1">
    <location>
        <begin position="159"/>
        <end position="161"/>
    </location>
</feature>
<feature type="transmembrane region" description="Helical; Name=Helix E" evidence="1">
    <location>
        <begin position="162"/>
        <end position="184"/>
    </location>
</feature>
<feature type="topological domain" description="Cytoplasmic" evidence="1">
    <location>
        <begin position="185"/>
        <end position="196"/>
    </location>
</feature>
<feature type="transmembrane region" description="Helical; Name=Helix F" evidence="1">
    <location>
        <begin position="197"/>
        <end position="220"/>
    </location>
</feature>
<feature type="topological domain" description="Extracellular" evidence="1">
    <location>
        <begin position="221"/>
        <end position="229"/>
    </location>
</feature>
<feature type="transmembrane region" description="Helical; Name=Helix G" evidence="1">
    <location>
        <begin position="230"/>
        <end position="258"/>
    </location>
</feature>
<feature type="topological domain" description="Cytoplasmic" evidence="1">
    <location>
        <begin position="259"/>
        <end position="282"/>
    </location>
</feature>
<feature type="modified residue" description="N6-(retinylidene)lysine" evidence="1">
    <location>
        <position position="245"/>
    </location>
</feature>
<sequence>MMETAADALASGTVPLEMTQTQIFEAIQGDTLLASSLWINIALAGLSILLFVYMGRNLEDPRAQLIFVATLMVPLVSISSYTGLVSGLTVSFLEMPAGHALAGQEVLTPWGRYLTWALSTPMILVALGLLAGSNATKLFTAVTADIGMCVTGLAAALTTSSYLLRWVWYVISCAFFVVVLYVLLAEWAEDAEVAGTAEIFNTLKLLTVVLWLGYPIFWALGAEGLAVLDVAVTSWAYSGMDIVAKYLFAFLLLRWVVDNERTVAGMAAGLGAPLARCAPADD</sequence>
<accession>O93742</accession>
<evidence type="ECO:0000250" key="1"/>
<evidence type="ECO:0000305" key="2"/>
<organism>
    <name type="scientific">Halorubrum sodomense</name>
    <dbReference type="NCBI Taxonomy" id="35743"/>
    <lineage>
        <taxon>Archaea</taxon>
        <taxon>Methanobacteriati</taxon>
        <taxon>Methanobacteriota</taxon>
        <taxon>Stenosarchaea group</taxon>
        <taxon>Halobacteria</taxon>
        <taxon>Halobacteriales</taxon>
        <taxon>Haloferacaceae</taxon>
        <taxon>Halorubrum</taxon>
    </lineage>
</organism>
<proteinExistence type="inferred from homology"/>
<dbReference type="EMBL" id="AB009622">
    <property type="protein sequence ID" value="BAA75202.1"/>
    <property type="molecule type" value="Genomic_DNA"/>
</dbReference>
<dbReference type="PIR" id="T43840">
    <property type="entry name" value="T43840"/>
</dbReference>
<dbReference type="SMR" id="O93742"/>
<dbReference type="STRING" id="35743.SAMN04487937_1656"/>
<dbReference type="GO" id="GO:0005886">
    <property type="term" value="C:plasma membrane"/>
    <property type="evidence" value="ECO:0007669"/>
    <property type="project" value="UniProtKB-SubCell"/>
</dbReference>
<dbReference type="GO" id="GO:0005216">
    <property type="term" value="F:monoatomic ion channel activity"/>
    <property type="evidence" value="ECO:0007669"/>
    <property type="project" value="InterPro"/>
</dbReference>
<dbReference type="GO" id="GO:0009881">
    <property type="term" value="F:photoreceptor activity"/>
    <property type="evidence" value="ECO:0007669"/>
    <property type="project" value="UniProtKB-KW"/>
</dbReference>
<dbReference type="GO" id="GO:0007602">
    <property type="term" value="P:phototransduction"/>
    <property type="evidence" value="ECO:0007669"/>
    <property type="project" value="UniProtKB-KW"/>
</dbReference>
<dbReference type="CDD" id="cd15243">
    <property type="entry name" value="7tm_Halorhodopsin"/>
    <property type="match status" value="1"/>
</dbReference>
<dbReference type="Gene3D" id="1.20.1070.10">
    <property type="entry name" value="Rhodopsin 7-helix transmembrane proteins"/>
    <property type="match status" value="1"/>
</dbReference>
<dbReference type="InterPro" id="IPR001425">
    <property type="entry name" value="Arc/bac/fun_rhodopsins"/>
</dbReference>
<dbReference type="InterPro" id="IPR018229">
    <property type="entry name" value="Rhodopsin_retinal_BS"/>
</dbReference>
<dbReference type="PANTHER" id="PTHR28286">
    <property type="match status" value="1"/>
</dbReference>
<dbReference type="PANTHER" id="PTHR28286:SF2">
    <property type="entry name" value="BACTERIORHODOPSIN _OPSIN, NOPA (EUROFUNG)"/>
    <property type="match status" value="1"/>
</dbReference>
<dbReference type="Pfam" id="PF01036">
    <property type="entry name" value="Bac_rhodopsin"/>
    <property type="match status" value="1"/>
</dbReference>
<dbReference type="PRINTS" id="PR00251">
    <property type="entry name" value="BACTRLOPSIN"/>
</dbReference>
<dbReference type="SMART" id="SM01021">
    <property type="entry name" value="Bac_rhodopsin"/>
    <property type="match status" value="1"/>
</dbReference>
<dbReference type="SUPFAM" id="SSF81321">
    <property type="entry name" value="Family A G protein-coupled receptor-like"/>
    <property type="match status" value="1"/>
</dbReference>
<dbReference type="PROSITE" id="PS00950">
    <property type="entry name" value="BACTERIAL_OPSIN_1"/>
    <property type="match status" value="1"/>
</dbReference>
<dbReference type="PROSITE" id="PS00327">
    <property type="entry name" value="BACTERIAL_OPSIN_RET"/>
    <property type="match status" value="1"/>
</dbReference>
<protein>
    <recommendedName>
        <fullName>Halorhodopsin</fullName>
        <shortName>HR</shortName>
    </recommendedName>
</protein>
<reference key="1">
    <citation type="journal article" date="1999" name="J. Mol. Biol.">
        <title>Evolution of the archaeal rhodopsins: evolution rate changes by gene duplication and functional differentiation.</title>
        <authorList>
            <person name="Ihara K."/>
            <person name="Umemura T."/>
            <person name="Katagiri I."/>
            <person name="Kitajima-Ihara T."/>
            <person name="Sugiyama Y."/>
            <person name="Kimura Y."/>
            <person name="Mukohata Y."/>
        </authorList>
    </citation>
    <scope>NUCLEOTIDE SEQUENCE [GENOMIC DNA]</scope>
</reference>
<keyword id="KW-1003">Cell membrane</keyword>
<keyword id="KW-0868">Chloride</keyword>
<keyword id="KW-0157">Chromophore</keyword>
<keyword id="KW-0406">Ion transport</keyword>
<keyword id="KW-0472">Membrane</keyword>
<keyword id="KW-0600">Photoreceptor protein</keyword>
<keyword id="KW-0675">Receptor</keyword>
<keyword id="KW-0681">Retinal protein</keyword>
<keyword id="KW-0716">Sensory transduction</keyword>
<keyword id="KW-0812">Transmembrane</keyword>
<keyword id="KW-1133">Transmembrane helix</keyword>
<keyword id="KW-0813">Transport</keyword>
<name>BACH_HALSD</name>
<gene>
    <name type="primary">hop</name>
</gene>